<protein>
    <recommendedName>
        <fullName evidence="1">Peptide deformylase</fullName>
        <shortName evidence="1">PDF</shortName>
        <ecNumber evidence="1">3.5.1.88</ecNumber>
    </recommendedName>
    <alternativeName>
        <fullName evidence="1">Polypeptide deformylase</fullName>
    </alternativeName>
</protein>
<reference key="1">
    <citation type="journal article" date="2000" name="Nucleic Acids Res.">
        <title>Complete genome sequence of the alkaliphilic bacterium Bacillus halodurans and genomic sequence comparison with Bacillus subtilis.</title>
        <authorList>
            <person name="Takami H."/>
            <person name="Nakasone K."/>
            <person name="Takaki Y."/>
            <person name="Maeno G."/>
            <person name="Sasaki R."/>
            <person name="Masui N."/>
            <person name="Fuji F."/>
            <person name="Hirama C."/>
            <person name="Nakamura Y."/>
            <person name="Ogasawara N."/>
            <person name="Kuhara S."/>
            <person name="Horikoshi K."/>
        </authorList>
    </citation>
    <scope>NUCLEOTIDE SEQUENCE [LARGE SCALE GENOMIC DNA]</scope>
    <source>
        <strain>ATCC BAA-125 / DSM 18197 / FERM 7344 / JCM 9153 / C-125</strain>
    </source>
</reference>
<proteinExistence type="inferred from homology"/>
<dbReference type="EC" id="3.5.1.88" evidence="1"/>
<dbReference type="EMBL" id="BA000004">
    <property type="protein sequence ID" value="BAB06377.1"/>
    <property type="molecule type" value="Genomic_DNA"/>
</dbReference>
<dbReference type="PIR" id="B83982">
    <property type="entry name" value="B83982"/>
</dbReference>
<dbReference type="RefSeq" id="WP_010898807.1">
    <property type="nucleotide sequence ID" value="NC_002570.2"/>
</dbReference>
<dbReference type="SMR" id="Q9K9I9"/>
<dbReference type="STRING" id="272558.gene:10728556"/>
<dbReference type="GeneID" id="87598170"/>
<dbReference type="KEGG" id="bha:BH2658"/>
<dbReference type="eggNOG" id="COG0242">
    <property type="taxonomic scope" value="Bacteria"/>
</dbReference>
<dbReference type="HOGENOM" id="CLU_061901_4_0_9"/>
<dbReference type="OrthoDB" id="9784988at2"/>
<dbReference type="Proteomes" id="UP000001258">
    <property type="component" value="Chromosome"/>
</dbReference>
<dbReference type="GO" id="GO:0046872">
    <property type="term" value="F:metal ion binding"/>
    <property type="evidence" value="ECO:0007669"/>
    <property type="project" value="UniProtKB-KW"/>
</dbReference>
<dbReference type="GO" id="GO:0042586">
    <property type="term" value="F:peptide deformylase activity"/>
    <property type="evidence" value="ECO:0007669"/>
    <property type="project" value="UniProtKB-UniRule"/>
</dbReference>
<dbReference type="GO" id="GO:0043686">
    <property type="term" value="P:co-translational protein modification"/>
    <property type="evidence" value="ECO:0007669"/>
    <property type="project" value="TreeGrafter"/>
</dbReference>
<dbReference type="GO" id="GO:0006412">
    <property type="term" value="P:translation"/>
    <property type="evidence" value="ECO:0007669"/>
    <property type="project" value="UniProtKB-UniRule"/>
</dbReference>
<dbReference type="CDD" id="cd00487">
    <property type="entry name" value="Pep_deformylase"/>
    <property type="match status" value="1"/>
</dbReference>
<dbReference type="FunFam" id="3.90.45.10:FF:000002">
    <property type="entry name" value="Peptide deformylase"/>
    <property type="match status" value="1"/>
</dbReference>
<dbReference type="Gene3D" id="3.90.45.10">
    <property type="entry name" value="Peptide deformylase"/>
    <property type="match status" value="1"/>
</dbReference>
<dbReference type="HAMAP" id="MF_00163">
    <property type="entry name" value="Pep_deformylase"/>
    <property type="match status" value="1"/>
</dbReference>
<dbReference type="InterPro" id="IPR023635">
    <property type="entry name" value="Peptide_deformylase"/>
</dbReference>
<dbReference type="InterPro" id="IPR036821">
    <property type="entry name" value="Peptide_deformylase_sf"/>
</dbReference>
<dbReference type="NCBIfam" id="TIGR00079">
    <property type="entry name" value="pept_deformyl"/>
    <property type="match status" value="1"/>
</dbReference>
<dbReference type="PANTHER" id="PTHR10458">
    <property type="entry name" value="PEPTIDE DEFORMYLASE"/>
    <property type="match status" value="1"/>
</dbReference>
<dbReference type="PANTHER" id="PTHR10458:SF8">
    <property type="entry name" value="PEPTIDE DEFORMYLASE 2"/>
    <property type="match status" value="1"/>
</dbReference>
<dbReference type="Pfam" id="PF01327">
    <property type="entry name" value="Pep_deformylase"/>
    <property type="match status" value="1"/>
</dbReference>
<dbReference type="PIRSF" id="PIRSF004749">
    <property type="entry name" value="Pep_def"/>
    <property type="match status" value="1"/>
</dbReference>
<dbReference type="PRINTS" id="PR01576">
    <property type="entry name" value="PDEFORMYLASE"/>
</dbReference>
<dbReference type="SUPFAM" id="SSF56420">
    <property type="entry name" value="Peptide deformylase"/>
    <property type="match status" value="1"/>
</dbReference>
<evidence type="ECO:0000255" key="1">
    <source>
        <dbReference type="HAMAP-Rule" id="MF_00163"/>
    </source>
</evidence>
<organism>
    <name type="scientific">Halalkalibacterium halodurans (strain ATCC BAA-125 / DSM 18197 / FERM 7344 / JCM 9153 / C-125)</name>
    <name type="common">Bacillus halodurans</name>
    <dbReference type="NCBI Taxonomy" id="272558"/>
    <lineage>
        <taxon>Bacteria</taxon>
        <taxon>Bacillati</taxon>
        <taxon>Bacillota</taxon>
        <taxon>Bacilli</taxon>
        <taxon>Bacillales</taxon>
        <taxon>Bacillaceae</taxon>
        <taxon>Halalkalibacterium (ex Joshi et al. 2022)</taxon>
    </lineage>
</organism>
<comment type="function">
    <text evidence="1">Removes the formyl group from the N-terminal Met of newly synthesized proteins. Requires at least a dipeptide for an efficient rate of reaction. N-terminal L-methionine is a prerequisite for activity but the enzyme has broad specificity at other positions.</text>
</comment>
<comment type="catalytic activity">
    <reaction evidence="1">
        <text>N-terminal N-formyl-L-methionyl-[peptide] + H2O = N-terminal L-methionyl-[peptide] + formate</text>
        <dbReference type="Rhea" id="RHEA:24420"/>
        <dbReference type="Rhea" id="RHEA-COMP:10639"/>
        <dbReference type="Rhea" id="RHEA-COMP:10640"/>
        <dbReference type="ChEBI" id="CHEBI:15377"/>
        <dbReference type="ChEBI" id="CHEBI:15740"/>
        <dbReference type="ChEBI" id="CHEBI:49298"/>
        <dbReference type="ChEBI" id="CHEBI:64731"/>
        <dbReference type="EC" id="3.5.1.88"/>
    </reaction>
</comment>
<comment type="cofactor">
    <cofactor evidence="1">
        <name>Fe(2+)</name>
        <dbReference type="ChEBI" id="CHEBI:29033"/>
    </cofactor>
    <text evidence="1">Binds 1 Fe(2+) ion.</text>
</comment>
<comment type="similarity">
    <text evidence="1">Belongs to the polypeptide deformylase family.</text>
</comment>
<gene>
    <name evidence="1" type="primary">def</name>
    <name type="ordered locus">BH2658</name>
</gene>
<accession>Q9K9I9</accession>
<feature type="chain" id="PRO_0000082737" description="Peptide deformylase">
    <location>
        <begin position="1"/>
        <end position="182"/>
    </location>
</feature>
<feature type="active site" evidence="1">
    <location>
        <position position="154"/>
    </location>
</feature>
<feature type="binding site" evidence="1">
    <location>
        <position position="110"/>
    </location>
    <ligand>
        <name>Fe cation</name>
        <dbReference type="ChEBI" id="CHEBI:24875"/>
    </ligand>
</feature>
<feature type="binding site" evidence="1">
    <location>
        <position position="153"/>
    </location>
    <ligand>
        <name>Fe cation</name>
        <dbReference type="ChEBI" id="CHEBI:24875"/>
    </ligand>
</feature>
<feature type="binding site" evidence="1">
    <location>
        <position position="157"/>
    </location>
    <ligand>
        <name>Fe cation</name>
        <dbReference type="ChEBI" id="CHEBI:24875"/>
    </ligand>
</feature>
<keyword id="KW-0378">Hydrolase</keyword>
<keyword id="KW-0408">Iron</keyword>
<keyword id="KW-0479">Metal-binding</keyword>
<keyword id="KW-0648">Protein biosynthesis</keyword>
<keyword id="KW-1185">Reference proteome</keyword>
<name>DEF_HALH5</name>
<sequence length="182" mass="20599">MLTMKDIVREGNPVLREVAKPVPVPLSDEDKQTAKRMLEFLINSQNPEIAEKYSLRPGVGLAAPQIGLSKQMIAVHTTDENEKEYSLVLFNPKIISESVEMTHLEGGEGCLSVDREVQGIVPRHARITVKAINENNEEVRLKLKGFPAIVFQHEIDHLNGIMFYDRIEGWVDPYKREINPSL</sequence>